<feature type="chain" id="PRO_0000431523" description="Global transcription regulator sge1">
    <location>
        <begin position="1"/>
        <end position="328"/>
    </location>
</feature>
<feature type="region of interest" description="Disordered" evidence="2">
    <location>
        <begin position="94"/>
        <end position="120"/>
    </location>
</feature>
<feature type="region of interest" description="Disordered" evidence="2">
    <location>
        <begin position="251"/>
        <end position="293"/>
    </location>
</feature>
<feature type="compositionally biased region" description="Low complexity" evidence="2">
    <location>
        <begin position="106"/>
        <end position="116"/>
    </location>
</feature>
<feature type="compositionally biased region" description="Low complexity" evidence="2">
    <location>
        <begin position="251"/>
        <end position="261"/>
    </location>
</feature>
<feature type="compositionally biased region" description="Low complexity" evidence="2">
    <location>
        <begin position="282"/>
        <end position="293"/>
    </location>
</feature>
<dbReference type="EMBL" id="CM000582">
    <property type="protein sequence ID" value="EWG49689.1"/>
    <property type="molecule type" value="Genomic_DNA"/>
</dbReference>
<dbReference type="RefSeq" id="XP_018755880.1">
    <property type="nucleotide sequence ID" value="XM_018898080.1"/>
</dbReference>
<dbReference type="SMR" id="W7MPI5"/>
<dbReference type="STRING" id="334819.W7MPI5"/>
<dbReference type="EnsemblFungi" id="FVEG_09150T0">
    <property type="protein sequence ID" value="FVEG_09150T0"/>
    <property type="gene ID" value="FVEG_09150"/>
</dbReference>
<dbReference type="GeneID" id="30066829"/>
<dbReference type="KEGG" id="fvr:FVEG_09150"/>
<dbReference type="VEuPathDB" id="FungiDB:FVEG_09150"/>
<dbReference type="eggNOG" id="KOG4476">
    <property type="taxonomic scope" value="Eukaryota"/>
</dbReference>
<dbReference type="HOGENOM" id="CLU_028895_3_0_1"/>
<dbReference type="OMA" id="VHQPLAH"/>
<dbReference type="OrthoDB" id="110434at110618"/>
<dbReference type="PHI-base" id="PHI:4225"/>
<dbReference type="Proteomes" id="UP000009096">
    <property type="component" value="Chromosome 5"/>
</dbReference>
<dbReference type="GO" id="GO:0005634">
    <property type="term" value="C:nucleus"/>
    <property type="evidence" value="ECO:0007669"/>
    <property type="project" value="UniProtKB-SubCell"/>
</dbReference>
<dbReference type="GO" id="GO:0003677">
    <property type="term" value="F:DNA binding"/>
    <property type="evidence" value="ECO:0007669"/>
    <property type="project" value="TreeGrafter"/>
</dbReference>
<dbReference type="InterPro" id="IPR018608">
    <property type="entry name" value="Gti1/Pac2"/>
</dbReference>
<dbReference type="PANTHER" id="PTHR28027">
    <property type="entry name" value="TRANSCRIPTIONAL REGULATOR MIT1"/>
    <property type="match status" value="1"/>
</dbReference>
<dbReference type="PANTHER" id="PTHR28027:SF2">
    <property type="entry name" value="TRANSCRIPTIONAL REGULATOR MIT1"/>
    <property type="match status" value="1"/>
</dbReference>
<dbReference type="Pfam" id="PF09729">
    <property type="entry name" value="Gti1_Pac2"/>
    <property type="match status" value="1"/>
</dbReference>
<comment type="function">
    <text evidence="3">Global transcriptional regulator of transcription that impacts, but is not absolutely required for secondary metabolism and pathogenicity on maize. Regulates synthesis of multiple secondary metabolites, including fumonisins and fusarins.</text>
</comment>
<comment type="subcellular location">
    <subcellularLocation>
        <location evidence="1">Nucleus</location>
    </subcellularLocation>
</comment>
<comment type="similarity">
    <text evidence="5">Belongs to the MIT1/WOR1 family.</text>
</comment>
<proteinExistence type="inferred from homology"/>
<keyword id="KW-0539">Nucleus</keyword>
<keyword id="KW-1185">Reference proteome</keyword>
<keyword id="KW-0804">Transcription</keyword>
<keyword id="KW-0805">Transcription regulation</keyword>
<keyword id="KW-0843">Virulence</keyword>
<evidence type="ECO:0000250" key="1">
    <source>
        <dbReference type="UniProtKB" id="J9N5P9"/>
    </source>
</evidence>
<evidence type="ECO:0000256" key="2">
    <source>
        <dbReference type="SAM" id="MobiDB-lite"/>
    </source>
</evidence>
<evidence type="ECO:0000269" key="3">
    <source>
    </source>
</evidence>
<evidence type="ECO:0000303" key="4">
    <source>
    </source>
</evidence>
<evidence type="ECO:0000305" key="5"/>
<evidence type="ECO:0000312" key="6">
    <source>
        <dbReference type="EMBL" id="EWG49689.1"/>
    </source>
</evidence>
<accession>W7MPI5</accession>
<gene>
    <name evidence="4" type="primary">sge1</name>
    <name evidence="6" type="ORF">FVEG_09150</name>
</gene>
<protein>
    <recommendedName>
        <fullName evidence="5">Global transcription regulator sge1</fullName>
    </recommendedName>
</protein>
<reference key="1">
    <citation type="journal article" date="2010" name="Nature">
        <title>Comparative genomics reveals mobile pathogenicity chromosomes in Fusarium.</title>
        <authorList>
            <person name="Ma L.-J."/>
            <person name="van der Does H.C."/>
            <person name="Borkovich K.A."/>
            <person name="Coleman J.J."/>
            <person name="Daboussi M.-J."/>
            <person name="Di Pietro A."/>
            <person name="Dufresne M."/>
            <person name="Freitag M."/>
            <person name="Grabherr M."/>
            <person name="Henrissat B."/>
            <person name="Houterman P.M."/>
            <person name="Kang S."/>
            <person name="Shim W.-B."/>
            <person name="Woloshuk C."/>
            <person name="Xie X."/>
            <person name="Xu J.-R."/>
            <person name="Antoniw J."/>
            <person name="Baker S.E."/>
            <person name="Bluhm B.H."/>
            <person name="Breakspear A."/>
            <person name="Brown D.W."/>
            <person name="Butchko R.A.E."/>
            <person name="Chapman S."/>
            <person name="Coulson R."/>
            <person name="Coutinho P.M."/>
            <person name="Danchin E.G.J."/>
            <person name="Diener A."/>
            <person name="Gale L.R."/>
            <person name="Gardiner D.M."/>
            <person name="Goff S."/>
            <person name="Hammond-Kosack K.E."/>
            <person name="Hilburn K."/>
            <person name="Hua-Van A."/>
            <person name="Jonkers W."/>
            <person name="Kazan K."/>
            <person name="Kodira C.D."/>
            <person name="Koehrsen M."/>
            <person name="Kumar L."/>
            <person name="Lee Y.-H."/>
            <person name="Li L."/>
            <person name="Manners J.M."/>
            <person name="Miranda-Saavedra D."/>
            <person name="Mukherjee M."/>
            <person name="Park G."/>
            <person name="Park J."/>
            <person name="Park S.-Y."/>
            <person name="Proctor R.H."/>
            <person name="Regev A."/>
            <person name="Ruiz-Roldan M.C."/>
            <person name="Sain D."/>
            <person name="Sakthikumar S."/>
            <person name="Sykes S."/>
            <person name="Schwartz D.C."/>
            <person name="Turgeon B.G."/>
            <person name="Wapinski I."/>
            <person name="Yoder O."/>
            <person name="Young S."/>
            <person name="Zeng Q."/>
            <person name="Zhou S."/>
            <person name="Galagan J."/>
            <person name="Cuomo C.A."/>
            <person name="Kistler H.C."/>
            <person name="Rep M."/>
        </authorList>
    </citation>
    <scope>NUCLEOTIDE SEQUENCE [LARGE SCALE GENOMIC DNA]</scope>
    <source>
        <strain>M3125 / FGSC 7600</strain>
    </source>
</reference>
<reference key="2">
    <citation type="journal article" date="2014" name="Mol. Plant Microbe Interact.">
        <title>Fusarium verticillioides SGE1 is required for full virulence and regulates expression of protein effector and secondary metabolite biosynthetic genes.</title>
        <authorList>
            <person name="Brown D.W."/>
            <person name="Busman M."/>
            <person name="Proctor R.H."/>
        </authorList>
    </citation>
    <scope>FUNCTION</scope>
</reference>
<name>WOR1_GIBM7</name>
<organism>
    <name type="scientific">Gibberella moniliformis (strain M3125 / FGSC 7600)</name>
    <name type="common">Maize ear and stalk rot fungus</name>
    <name type="synonym">Fusarium verticillioides</name>
    <dbReference type="NCBI Taxonomy" id="334819"/>
    <lineage>
        <taxon>Eukaryota</taxon>
        <taxon>Fungi</taxon>
        <taxon>Dikarya</taxon>
        <taxon>Ascomycota</taxon>
        <taxon>Pezizomycotina</taxon>
        <taxon>Sordariomycetes</taxon>
        <taxon>Hypocreomycetidae</taxon>
        <taxon>Hypocreales</taxon>
        <taxon>Nectriaceae</taxon>
        <taxon>Fusarium</taxon>
        <taxon>Fusarium fujikuroi species complex</taxon>
    </lineage>
</organism>
<sequence>MSGTTQLRPTYHGYVRDTTDALIIFEACLAGQLLHVPRRPHDRERQNVIKSGSIFVYEEHASGIKRWTDSITWSPSRIMGNYLVYRQLEKPFAPGEKKRAKGKGGKSTTQSGGISKPRQRNALPFQQGLEQGNEYPSVPSDEDRQLVGSLVDSYDFKEQGLVKKTISITYNGVPHHLISYYTVEDVKAGLLTSPADDQGLRGVVPRAELTNGQNFRAPIEESIGGAYMPGMRHSAGFPHPSAYPTLLHQPQMHQPQVHQPLAHQPQVHQPLAHQPQVHQPLAHQPQVHQQYVHQPQAHQPYMHQPQVHLNGYQPSYGDGQWWKYLGGT</sequence>